<accession>Q9ZE68</accession>
<evidence type="ECO:0000250" key="1"/>
<evidence type="ECO:0000255" key="2"/>
<evidence type="ECO:0000305" key="3"/>
<name>SECG_RICPR</name>
<sequence length="100" mass="10657">MIDIFLFVHITISILLIIVILMQRSGSGGISGISGDNNMGVVSAKTVGNFLSKSTIILTTLFLINAIVLANLSAKKQSDLVSKINEIEENQADNSLPIAK</sequence>
<dbReference type="EMBL" id="AJ235270">
    <property type="protein sequence ID" value="CAA14549.1"/>
    <property type="molecule type" value="Genomic_DNA"/>
</dbReference>
<dbReference type="PIR" id="F71716">
    <property type="entry name" value="F71716"/>
</dbReference>
<dbReference type="RefSeq" id="NP_220472.1">
    <property type="nucleotide sequence ID" value="NC_000963.1"/>
</dbReference>
<dbReference type="RefSeq" id="WP_010886204.1">
    <property type="nucleotide sequence ID" value="NC_000963.1"/>
</dbReference>
<dbReference type="SMR" id="Q9ZE68"/>
<dbReference type="STRING" id="272947.gene:17555162"/>
<dbReference type="EnsemblBacteria" id="CAA14549">
    <property type="protein sequence ID" value="CAA14549"/>
    <property type="gene ID" value="CAA14549"/>
</dbReference>
<dbReference type="GeneID" id="57569207"/>
<dbReference type="KEGG" id="rpr:RP079"/>
<dbReference type="PATRIC" id="fig|272947.5.peg.79"/>
<dbReference type="eggNOG" id="COG1314">
    <property type="taxonomic scope" value="Bacteria"/>
</dbReference>
<dbReference type="HOGENOM" id="CLU_094156_4_2_5"/>
<dbReference type="Proteomes" id="UP000002480">
    <property type="component" value="Chromosome"/>
</dbReference>
<dbReference type="GO" id="GO:0005886">
    <property type="term" value="C:plasma membrane"/>
    <property type="evidence" value="ECO:0007669"/>
    <property type="project" value="UniProtKB-SubCell"/>
</dbReference>
<dbReference type="GO" id="GO:0015450">
    <property type="term" value="F:protein-transporting ATPase activity"/>
    <property type="evidence" value="ECO:0007669"/>
    <property type="project" value="InterPro"/>
</dbReference>
<dbReference type="GO" id="GO:0065002">
    <property type="term" value="P:intracellular protein transmembrane transport"/>
    <property type="evidence" value="ECO:0007669"/>
    <property type="project" value="TreeGrafter"/>
</dbReference>
<dbReference type="GO" id="GO:0009306">
    <property type="term" value="P:protein secretion"/>
    <property type="evidence" value="ECO:0007669"/>
    <property type="project" value="InterPro"/>
</dbReference>
<dbReference type="GO" id="GO:0043952">
    <property type="term" value="P:protein transport by the Sec complex"/>
    <property type="evidence" value="ECO:0007669"/>
    <property type="project" value="TreeGrafter"/>
</dbReference>
<dbReference type="InterPro" id="IPR004692">
    <property type="entry name" value="SecG"/>
</dbReference>
<dbReference type="NCBIfam" id="TIGR00810">
    <property type="entry name" value="secG"/>
    <property type="match status" value="1"/>
</dbReference>
<dbReference type="PANTHER" id="PTHR34182">
    <property type="entry name" value="PROTEIN-EXPORT MEMBRANE PROTEIN SECG"/>
    <property type="match status" value="1"/>
</dbReference>
<dbReference type="PANTHER" id="PTHR34182:SF1">
    <property type="entry name" value="PROTEIN-EXPORT MEMBRANE PROTEIN SECG"/>
    <property type="match status" value="1"/>
</dbReference>
<dbReference type="Pfam" id="PF03840">
    <property type="entry name" value="SecG"/>
    <property type="match status" value="1"/>
</dbReference>
<dbReference type="PRINTS" id="PR01651">
    <property type="entry name" value="SECGEXPORT"/>
</dbReference>
<comment type="function">
    <text evidence="1">Involved in protein export. Participates in an early event of protein translocation (By similarity).</text>
</comment>
<comment type="subcellular location">
    <subcellularLocation>
        <location evidence="1">Cell membrane</location>
        <topology evidence="1">Multi-pass membrane protein</topology>
    </subcellularLocation>
</comment>
<comment type="similarity">
    <text evidence="3">Belongs to the SecG family.</text>
</comment>
<reference key="1">
    <citation type="journal article" date="1998" name="Nature">
        <title>The genome sequence of Rickettsia prowazekii and the origin of mitochondria.</title>
        <authorList>
            <person name="Andersson S.G.E."/>
            <person name="Zomorodipour A."/>
            <person name="Andersson J.O."/>
            <person name="Sicheritz-Ponten T."/>
            <person name="Alsmark U.C.M."/>
            <person name="Podowski R.M."/>
            <person name="Naeslund A.K."/>
            <person name="Eriksson A.-S."/>
            <person name="Winkler H.H."/>
            <person name="Kurland C.G."/>
        </authorList>
    </citation>
    <scope>NUCLEOTIDE SEQUENCE [LARGE SCALE GENOMIC DNA]</scope>
    <source>
        <strain>Madrid E</strain>
    </source>
</reference>
<protein>
    <recommendedName>
        <fullName>Protein-export membrane protein SecG</fullName>
    </recommendedName>
</protein>
<gene>
    <name type="primary">secG</name>
    <name type="ordered locus">RP079</name>
</gene>
<feature type="chain" id="PRO_0000157239" description="Protein-export membrane protein SecG">
    <location>
        <begin position="1"/>
        <end position="100"/>
    </location>
</feature>
<feature type="transmembrane region" description="Helical" evidence="2">
    <location>
        <begin position="1"/>
        <end position="21"/>
    </location>
</feature>
<feature type="transmembrane region" description="Helical" evidence="2">
    <location>
        <begin position="54"/>
        <end position="74"/>
    </location>
</feature>
<organism>
    <name type="scientific">Rickettsia prowazekii (strain Madrid E)</name>
    <dbReference type="NCBI Taxonomy" id="272947"/>
    <lineage>
        <taxon>Bacteria</taxon>
        <taxon>Pseudomonadati</taxon>
        <taxon>Pseudomonadota</taxon>
        <taxon>Alphaproteobacteria</taxon>
        <taxon>Rickettsiales</taxon>
        <taxon>Rickettsiaceae</taxon>
        <taxon>Rickettsieae</taxon>
        <taxon>Rickettsia</taxon>
        <taxon>typhus group</taxon>
    </lineage>
</organism>
<keyword id="KW-1003">Cell membrane</keyword>
<keyword id="KW-0472">Membrane</keyword>
<keyword id="KW-0653">Protein transport</keyword>
<keyword id="KW-1185">Reference proteome</keyword>
<keyword id="KW-0811">Translocation</keyword>
<keyword id="KW-0812">Transmembrane</keyword>
<keyword id="KW-1133">Transmembrane helix</keyword>
<keyword id="KW-0813">Transport</keyword>
<proteinExistence type="inferred from homology"/>